<name>SFSA_GEOUR</name>
<comment type="similarity">
    <text evidence="1">Belongs to the SfsA family.</text>
</comment>
<dbReference type="EMBL" id="CP000698">
    <property type="protein sequence ID" value="ABQ25326.1"/>
    <property type="molecule type" value="Genomic_DNA"/>
</dbReference>
<dbReference type="RefSeq" id="WP_011938048.1">
    <property type="nucleotide sequence ID" value="NC_009483.1"/>
</dbReference>
<dbReference type="SMR" id="A5GAS3"/>
<dbReference type="STRING" id="351605.Gura_1121"/>
<dbReference type="KEGG" id="gur:Gura_1121"/>
<dbReference type="HOGENOM" id="CLU_052299_2_0_7"/>
<dbReference type="OrthoDB" id="9802365at2"/>
<dbReference type="Proteomes" id="UP000006695">
    <property type="component" value="Chromosome"/>
</dbReference>
<dbReference type="GO" id="GO:0003677">
    <property type="term" value="F:DNA binding"/>
    <property type="evidence" value="ECO:0007669"/>
    <property type="project" value="InterPro"/>
</dbReference>
<dbReference type="CDD" id="cd22359">
    <property type="entry name" value="SfsA-like_bacterial"/>
    <property type="match status" value="1"/>
</dbReference>
<dbReference type="FunFam" id="3.40.1350.60:FF:000001">
    <property type="entry name" value="Sugar fermentation stimulation protein A"/>
    <property type="match status" value="1"/>
</dbReference>
<dbReference type="Gene3D" id="2.40.50.580">
    <property type="match status" value="1"/>
</dbReference>
<dbReference type="Gene3D" id="3.40.1350.60">
    <property type="match status" value="1"/>
</dbReference>
<dbReference type="HAMAP" id="MF_00095">
    <property type="entry name" value="SfsA"/>
    <property type="match status" value="1"/>
</dbReference>
<dbReference type="InterPro" id="IPR005224">
    <property type="entry name" value="SfsA"/>
</dbReference>
<dbReference type="InterPro" id="IPR040452">
    <property type="entry name" value="SfsA_C"/>
</dbReference>
<dbReference type="InterPro" id="IPR041465">
    <property type="entry name" value="SfsA_N"/>
</dbReference>
<dbReference type="NCBIfam" id="TIGR00230">
    <property type="entry name" value="sfsA"/>
    <property type="match status" value="1"/>
</dbReference>
<dbReference type="PANTHER" id="PTHR30545">
    <property type="entry name" value="SUGAR FERMENTATION STIMULATION PROTEIN A"/>
    <property type="match status" value="1"/>
</dbReference>
<dbReference type="PANTHER" id="PTHR30545:SF2">
    <property type="entry name" value="SUGAR FERMENTATION STIMULATION PROTEIN A"/>
    <property type="match status" value="1"/>
</dbReference>
<dbReference type="Pfam" id="PF03749">
    <property type="entry name" value="SfsA"/>
    <property type="match status" value="1"/>
</dbReference>
<dbReference type="Pfam" id="PF17746">
    <property type="entry name" value="SfsA_N"/>
    <property type="match status" value="1"/>
</dbReference>
<sequence length="231" mass="25620">MQLPIPLFPATLIRRYKRFLADFELESGEIVTAHCPNSGSMKGCATPGSPAFLSRSDKPERKLKYTWELVKADGCWIGINTGLPNRLVREAIENGLVAELQGYQTIRPEVRYGENSRIDLLLCNADQLCYVEVKNVTLVEGNAVLFPDAATTRGQKHLRELMGVVRQGHRAVNFFVVQRADGEFVAPADLIDPEYGRLLRQAAANGVEILAYRAHVAPEGINITGKLSVRM</sequence>
<protein>
    <recommendedName>
        <fullName evidence="1">Sugar fermentation stimulation protein homolog</fullName>
    </recommendedName>
</protein>
<feature type="chain" id="PRO_1000075541" description="Sugar fermentation stimulation protein homolog">
    <location>
        <begin position="1"/>
        <end position="231"/>
    </location>
</feature>
<gene>
    <name evidence="1" type="primary">sfsA</name>
    <name type="ordered locus">Gura_1121</name>
</gene>
<reference key="1">
    <citation type="submission" date="2007-05" db="EMBL/GenBank/DDBJ databases">
        <title>Complete sequence of Geobacter uraniireducens Rf4.</title>
        <authorList>
            <consortium name="US DOE Joint Genome Institute"/>
            <person name="Copeland A."/>
            <person name="Lucas S."/>
            <person name="Lapidus A."/>
            <person name="Barry K."/>
            <person name="Detter J.C."/>
            <person name="Glavina del Rio T."/>
            <person name="Hammon N."/>
            <person name="Israni S."/>
            <person name="Dalin E."/>
            <person name="Tice H."/>
            <person name="Pitluck S."/>
            <person name="Chertkov O."/>
            <person name="Brettin T."/>
            <person name="Bruce D."/>
            <person name="Han C."/>
            <person name="Schmutz J."/>
            <person name="Larimer F."/>
            <person name="Land M."/>
            <person name="Hauser L."/>
            <person name="Kyrpides N."/>
            <person name="Mikhailova N."/>
            <person name="Shelobolina E."/>
            <person name="Aklujkar M."/>
            <person name="Lovley D."/>
            <person name="Richardson P."/>
        </authorList>
    </citation>
    <scope>NUCLEOTIDE SEQUENCE [LARGE SCALE GENOMIC DNA]</scope>
    <source>
        <strain>ATCC BAA-1134 / JCM 13001 / Rf4</strain>
    </source>
</reference>
<accession>A5GAS3</accession>
<organism>
    <name type="scientific">Geotalea uraniireducens (strain Rf4)</name>
    <name type="common">Geobacter uraniireducens</name>
    <dbReference type="NCBI Taxonomy" id="351605"/>
    <lineage>
        <taxon>Bacteria</taxon>
        <taxon>Pseudomonadati</taxon>
        <taxon>Thermodesulfobacteriota</taxon>
        <taxon>Desulfuromonadia</taxon>
        <taxon>Geobacterales</taxon>
        <taxon>Geobacteraceae</taxon>
        <taxon>Geotalea</taxon>
    </lineage>
</organism>
<keyword id="KW-1185">Reference proteome</keyword>
<proteinExistence type="inferred from homology"/>
<evidence type="ECO:0000255" key="1">
    <source>
        <dbReference type="HAMAP-Rule" id="MF_00095"/>
    </source>
</evidence>